<gene>
    <name evidence="1" type="primary">astB</name>
    <name type="ordered locus">SEN1737</name>
</gene>
<sequence>MTAHEVNFDGLVGLTHHYAGLSFGNEASTRHRFQVSNPRLAVKQGLLKMKALADAGFLQAVIPPHERPFIPALRQLGFTGSDEQILDKVARQAPRWLSSVSSASPMWVANAATVCPSADALDGKVHLTVANLNNKFHRALEAPVTEALLRAIFRDENQFSVHSALPQVALLGDEGAANHNRLGGEYGSAGVQLFVYGREEENEIRPARYPARQSREASEAVARLNQVNPQQVIFAQQNPEVIDQGVFHNDVIAVSNRQVLFCHEAAFARQKVLINQLRTRVDGFMAIEVPAEEVSVSDAVATYLFNSQLLSRDDGSMLLVLPRECQDHAGVWRYLNKLVAEDNPISAIQVFDLRESMANGGGPACLRLRVVLTEEERRAVNPAVMMNDALFTALNAWADRYYRDRLTAADLADPLLLREGREALDVLTRLLDLGSVYPFQQTGAADG</sequence>
<keyword id="KW-0056">Arginine metabolism</keyword>
<keyword id="KW-0378">Hydrolase</keyword>
<accession>B5QWI7</accession>
<name>ASTB_SALEP</name>
<reference key="1">
    <citation type="journal article" date="2008" name="Genome Res.">
        <title>Comparative genome analysis of Salmonella enteritidis PT4 and Salmonella gallinarum 287/91 provides insights into evolutionary and host adaptation pathways.</title>
        <authorList>
            <person name="Thomson N.R."/>
            <person name="Clayton D.J."/>
            <person name="Windhorst D."/>
            <person name="Vernikos G."/>
            <person name="Davidson S."/>
            <person name="Churcher C."/>
            <person name="Quail M.A."/>
            <person name="Stevens M."/>
            <person name="Jones M.A."/>
            <person name="Watson M."/>
            <person name="Barron A."/>
            <person name="Layton A."/>
            <person name="Pickard D."/>
            <person name="Kingsley R.A."/>
            <person name="Bignell A."/>
            <person name="Clark L."/>
            <person name="Harris B."/>
            <person name="Ormond D."/>
            <person name="Abdellah Z."/>
            <person name="Brooks K."/>
            <person name="Cherevach I."/>
            <person name="Chillingworth T."/>
            <person name="Woodward J."/>
            <person name="Norberczak H."/>
            <person name="Lord A."/>
            <person name="Arrowsmith C."/>
            <person name="Jagels K."/>
            <person name="Moule S."/>
            <person name="Mungall K."/>
            <person name="Saunders M."/>
            <person name="Whitehead S."/>
            <person name="Chabalgoity J.A."/>
            <person name="Maskell D."/>
            <person name="Humphreys T."/>
            <person name="Roberts M."/>
            <person name="Barrow P.A."/>
            <person name="Dougan G."/>
            <person name="Parkhill J."/>
        </authorList>
    </citation>
    <scope>NUCLEOTIDE SEQUENCE [LARGE SCALE GENOMIC DNA]</scope>
    <source>
        <strain>P125109</strain>
    </source>
</reference>
<proteinExistence type="inferred from homology"/>
<protein>
    <recommendedName>
        <fullName evidence="1">N-succinylarginine dihydrolase</fullName>
        <ecNumber evidence="1">3.5.3.23</ecNumber>
    </recommendedName>
</protein>
<comment type="function">
    <text evidence="1">Catalyzes the hydrolysis of N(2)-succinylarginine into N(2)-succinylornithine, ammonia and CO(2).</text>
</comment>
<comment type="catalytic activity">
    <reaction evidence="1">
        <text>N(2)-succinyl-L-arginine + 2 H2O + 2 H(+) = N(2)-succinyl-L-ornithine + 2 NH4(+) + CO2</text>
        <dbReference type="Rhea" id="RHEA:19533"/>
        <dbReference type="ChEBI" id="CHEBI:15377"/>
        <dbReference type="ChEBI" id="CHEBI:15378"/>
        <dbReference type="ChEBI" id="CHEBI:16526"/>
        <dbReference type="ChEBI" id="CHEBI:28938"/>
        <dbReference type="ChEBI" id="CHEBI:58241"/>
        <dbReference type="ChEBI" id="CHEBI:58514"/>
        <dbReference type="EC" id="3.5.3.23"/>
    </reaction>
</comment>
<comment type="pathway">
    <text evidence="1">Amino-acid degradation; L-arginine degradation via AST pathway; L-glutamate and succinate from L-arginine: step 2/5.</text>
</comment>
<comment type="subunit">
    <text evidence="1">Homodimer.</text>
</comment>
<comment type="similarity">
    <text evidence="1">Belongs to the succinylarginine dihydrolase family.</text>
</comment>
<dbReference type="EC" id="3.5.3.23" evidence="1"/>
<dbReference type="EMBL" id="AM933172">
    <property type="protein sequence ID" value="CAR33318.1"/>
    <property type="molecule type" value="Genomic_DNA"/>
</dbReference>
<dbReference type="RefSeq" id="WP_000123938.1">
    <property type="nucleotide sequence ID" value="NC_011294.1"/>
</dbReference>
<dbReference type="SMR" id="B5QWI7"/>
<dbReference type="KEGG" id="set:SEN1737"/>
<dbReference type="HOGENOM" id="CLU_053835_0_0_6"/>
<dbReference type="UniPathway" id="UPA00185">
    <property type="reaction ID" value="UER00280"/>
</dbReference>
<dbReference type="Proteomes" id="UP000000613">
    <property type="component" value="Chromosome"/>
</dbReference>
<dbReference type="GO" id="GO:0009015">
    <property type="term" value="F:N-succinylarginine dihydrolase activity"/>
    <property type="evidence" value="ECO:0007669"/>
    <property type="project" value="UniProtKB-UniRule"/>
</dbReference>
<dbReference type="GO" id="GO:0019544">
    <property type="term" value="P:arginine catabolic process to glutamate"/>
    <property type="evidence" value="ECO:0007669"/>
    <property type="project" value="UniProtKB-UniRule"/>
</dbReference>
<dbReference type="GO" id="GO:0019545">
    <property type="term" value="P:arginine catabolic process to succinate"/>
    <property type="evidence" value="ECO:0007669"/>
    <property type="project" value="UniProtKB-UniRule"/>
</dbReference>
<dbReference type="FunFam" id="3.75.10.20:FF:000001">
    <property type="entry name" value="N-succinylarginine dihydrolase"/>
    <property type="match status" value="1"/>
</dbReference>
<dbReference type="Gene3D" id="3.75.10.20">
    <property type="entry name" value="Succinylarginine dihydrolase"/>
    <property type="match status" value="1"/>
</dbReference>
<dbReference type="HAMAP" id="MF_01172">
    <property type="entry name" value="AstB"/>
    <property type="match status" value="1"/>
</dbReference>
<dbReference type="InterPro" id="IPR037031">
    <property type="entry name" value="AstB_sf"/>
</dbReference>
<dbReference type="InterPro" id="IPR007079">
    <property type="entry name" value="SuccinylArg_d-Hdrlase_AstB"/>
</dbReference>
<dbReference type="NCBIfam" id="TIGR03241">
    <property type="entry name" value="arg_catab_astB"/>
    <property type="match status" value="1"/>
</dbReference>
<dbReference type="NCBIfam" id="NF009789">
    <property type="entry name" value="PRK13281.1"/>
    <property type="match status" value="1"/>
</dbReference>
<dbReference type="PANTHER" id="PTHR30420">
    <property type="entry name" value="N-SUCCINYLARGININE DIHYDROLASE"/>
    <property type="match status" value="1"/>
</dbReference>
<dbReference type="PANTHER" id="PTHR30420:SF2">
    <property type="entry name" value="N-SUCCINYLARGININE DIHYDROLASE"/>
    <property type="match status" value="1"/>
</dbReference>
<dbReference type="Pfam" id="PF04996">
    <property type="entry name" value="AstB"/>
    <property type="match status" value="1"/>
</dbReference>
<dbReference type="SUPFAM" id="SSF55909">
    <property type="entry name" value="Pentein"/>
    <property type="match status" value="1"/>
</dbReference>
<evidence type="ECO:0000255" key="1">
    <source>
        <dbReference type="HAMAP-Rule" id="MF_01172"/>
    </source>
</evidence>
<organism>
    <name type="scientific">Salmonella enteritidis PT4 (strain P125109)</name>
    <dbReference type="NCBI Taxonomy" id="550537"/>
    <lineage>
        <taxon>Bacteria</taxon>
        <taxon>Pseudomonadati</taxon>
        <taxon>Pseudomonadota</taxon>
        <taxon>Gammaproteobacteria</taxon>
        <taxon>Enterobacterales</taxon>
        <taxon>Enterobacteriaceae</taxon>
        <taxon>Salmonella</taxon>
    </lineage>
</organism>
<feature type="chain" id="PRO_1000138023" description="N-succinylarginine dihydrolase">
    <location>
        <begin position="1"/>
        <end position="447"/>
    </location>
</feature>
<feature type="active site" evidence="1">
    <location>
        <position position="174"/>
    </location>
</feature>
<feature type="active site" evidence="1">
    <location>
        <position position="248"/>
    </location>
</feature>
<feature type="active site" description="Nucleophile" evidence="1">
    <location>
        <position position="365"/>
    </location>
</feature>
<feature type="binding site" evidence="1">
    <location>
        <begin position="19"/>
        <end position="28"/>
    </location>
    <ligand>
        <name>substrate</name>
    </ligand>
</feature>
<feature type="binding site" evidence="1">
    <location>
        <position position="110"/>
    </location>
    <ligand>
        <name>substrate</name>
    </ligand>
</feature>
<feature type="binding site" evidence="1">
    <location>
        <begin position="137"/>
        <end position="138"/>
    </location>
    <ligand>
        <name>substrate</name>
    </ligand>
</feature>
<feature type="binding site" evidence="1">
    <location>
        <position position="212"/>
    </location>
    <ligand>
        <name>substrate</name>
    </ligand>
</feature>
<feature type="binding site" evidence="1">
    <location>
        <position position="250"/>
    </location>
    <ligand>
        <name>substrate</name>
    </ligand>
</feature>
<feature type="binding site" evidence="1">
    <location>
        <position position="359"/>
    </location>
    <ligand>
        <name>substrate</name>
    </ligand>
</feature>